<organism>
    <name type="scientific">Cyriopagopus hainanus</name>
    <name type="common">Chinese bird spider</name>
    <name type="synonym">Haplopelma hainanum</name>
    <dbReference type="NCBI Taxonomy" id="209901"/>
    <lineage>
        <taxon>Eukaryota</taxon>
        <taxon>Metazoa</taxon>
        <taxon>Ecdysozoa</taxon>
        <taxon>Arthropoda</taxon>
        <taxon>Chelicerata</taxon>
        <taxon>Arachnida</taxon>
        <taxon>Araneae</taxon>
        <taxon>Mygalomorphae</taxon>
        <taxon>Theraphosidae</taxon>
        <taxon>Haplopelma</taxon>
    </lineage>
</organism>
<protein>
    <recommendedName>
        <fullName>U7-theraphotoxin-Hhn1a 7</fullName>
        <shortName>U7-TRTX-Hhn1a</shortName>
    </recommendedName>
    <alternativeName>
        <fullName>Hainantoxin-XIII.7</fullName>
        <shortName>HNTX-XIII.7</shortName>
    </alternativeName>
</protein>
<feature type="signal peptide" evidence="2">
    <location>
        <begin position="1"/>
        <end position="19"/>
    </location>
</feature>
<feature type="propeptide" id="PRO_0000400691" evidence="1">
    <location>
        <begin position="20"/>
        <end position="50"/>
    </location>
</feature>
<feature type="peptide" id="PRO_0000400692" description="U7-theraphotoxin-Hhn1a 7">
    <location>
        <begin position="51"/>
        <end position="90"/>
    </location>
</feature>
<feature type="disulfide bond" evidence="1">
    <location>
        <begin position="51"/>
        <end position="65"/>
    </location>
</feature>
<feature type="disulfide bond" evidence="1">
    <location>
        <begin position="58"/>
        <end position="70"/>
    </location>
</feature>
<feature type="disulfide bond" evidence="1">
    <location>
        <begin position="64"/>
        <end position="81"/>
    </location>
</feature>
<name>H13A7_CYRHA</name>
<proteinExistence type="evidence at transcript level"/>
<reference key="1">
    <citation type="journal article" date="2010" name="J. Proteome Res.">
        <title>Molecular diversification of peptide toxins from the tarantula Haplopelma hainanum (Ornithoctonus hainana) venom based on transcriptomic, peptidomic, and genomic analyses.</title>
        <authorList>
            <person name="Tang X."/>
            <person name="Zhang Y."/>
            <person name="Hu W."/>
            <person name="Xu D."/>
            <person name="Tao H."/>
            <person name="Yang X."/>
            <person name="Li Y."/>
            <person name="Jiang L."/>
            <person name="Liang S."/>
        </authorList>
    </citation>
    <scope>NUCLEOTIDE SEQUENCE [LARGE SCALE MRNA]</scope>
    <source>
        <tissue>Venom gland</tissue>
    </source>
</reference>
<dbReference type="EMBL" id="GU292992">
    <property type="protein sequence ID" value="ADB56808.1"/>
    <property type="molecule type" value="mRNA"/>
</dbReference>
<dbReference type="SMR" id="D2Y2B5"/>
<dbReference type="ArachnoServer" id="AS001986">
    <property type="toxin name" value="U7-theraphotoxin-Hhn1a"/>
</dbReference>
<dbReference type="GO" id="GO:0005576">
    <property type="term" value="C:extracellular region"/>
    <property type="evidence" value="ECO:0007669"/>
    <property type="project" value="UniProtKB-SubCell"/>
</dbReference>
<dbReference type="GO" id="GO:0008200">
    <property type="term" value="F:ion channel inhibitor activity"/>
    <property type="evidence" value="ECO:0007669"/>
    <property type="project" value="InterPro"/>
</dbReference>
<dbReference type="GO" id="GO:0090729">
    <property type="term" value="F:toxin activity"/>
    <property type="evidence" value="ECO:0007669"/>
    <property type="project" value="UniProtKB-KW"/>
</dbReference>
<dbReference type="InterPro" id="IPR011696">
    <property type="entry name" value="Huwentoxin-1"/>
</dbReference>
<dbReference type="Pfam" id="PF07740">
    <property type="entry name" value="Toxin_12"/>
    <property type="match status" value="1"/>
</dbReference>
<dbReference type="SUPFAM" id="SSF57059">
    <property type="entry name" value="omega toxin-like"/>
    <property type="match status" value="1"/>
</dbReference>
<evidence type="ECO:0000250" key="1"/>
<evidence type="ECO:0000255" key="2"/>
<evidence type="ECO:0000305" key="3"/>
<accession>D2Y2B5</accession>
<sequence length="90" mass="10569">MKTAIFTVVLALAVFAVLSFGWEANEKALSEGFTELIHEKEAASETEARECRYFWGECHDHMPCCDWLVCRYKWPITYNICVWNRTFPEK</sequence>
<comment type="function">
    <text evidence="1">Ion channel inhibitor.</text>
</comment>
<comment type="subcellular location">
    <subcellularLocation>
        <location evidence="1">Secreted</location>
    </subcellularLocation>
</comment>
<comment type="tissue specificity">
    <text>Expressed by the venom gland.</text>
</comment>
<comment type="domain">
    <text evidence="1">The presence of a 'disulfide through disulfide knot' structurally defines this protein as a knottin.</text>
</comment>
<comment type="similarity">
    <text evidence="3">Belongs to the neurotoxin 10 (Hwtx-1) family. 13 (Hntx-13) subfamily.</text>
</comment>
<keyword id="KW-1015">Disulfide bond</keyword>
<keyword id="KW-0872">Ion channel impairing toxin</keyword>
<keyword id="KW-0960">Knottin</keyword>
<keyword id="KW-0964">Secreted</keyword>
<keyword id="KW-0732">Signal</keyword>
<keyword id="KW-0800">Toxin</keyword>